<protein>
    <recommendedName>
        <fullName evidence="1">Spermidine export protein MdtI</fullName>
    </recommendedName>
</protein>
<comment type="function">
    <text evidence="1">Catalyzes the excretion of spermidine.</text>
</comment>
<comment type="subunit">
    <text evidence="1">Forms a complex with MdtJ.</text>
</comment>
<comment type="subcellular location">
    <subcellularLocation>
        <location evidence="1">Cell inner membrane</location>
        <topology evidence="1">Multi-pass membrane protein</topology>
    </subcellularLocation>
</comment>
<comment type="similarity">
    <text evidence="1">Belongs to the drug/metabolite transporter (DMT) superfamily. Small multidrug resistance (SMR) (TC 2.A.7.1) family. MdtI subfamily.</text>
</comment>
<sequence length="109" mass="11720">MAQFEWVHAAWLALAIVLEIVANVFLKFSDGFRRKIFGLLSLAAVLAAFSALSQAVKGIDLSVAYALWGGFGIAATLAAGWILFGQRLNRKGWIGLVLLLAGMIMVKLA</sequence>
<accession>B6IB33</accession>
<gene>
    <name evidence="1" type="primary">mdtI</name>
    <name type="ordered locus">ECSE_1720</name>
</gene>
<dbReference type="EMBL" id="AP009240">
    <property type="protein sequence ID" value="BAG77244.1"/>
    <property type="molecule type" value="Genomic_DNA"/>
</dbReference>
<dbReference type="RefSeq" id="WP_000046661.1">
    <property type="nucleotide sequence ID" value="NC_011415.1"/>
</dbReference>
<dbReference type="SMR" id="B6IB33"/>
<dbReference type="GeneID" id="93775747"/>
<dbReference type="KEGG" id="ecy:ECSE_1720"/>
<dbReference type="HOGENOM" id="CLU_133067_0_4_6"/>
<dbReference type="Proteomes" id="UP000008199">
    <property type="component" value="Chromosome"/>
</dbReference>
<dbReference type="GO" id="GO:0005886">
    <property type="term" value="C:plasma membrane"/>
    <property type="evidence" value="ECO:0007669"/>
    <property type="project" value="UniProtKB-SubCell"/>
</dbReference>
<dbReference type="GO" id="GO:0015199">
    <property type="term" value="F:amino-acid betaine transmembrane transporter activity"/>
    <property type="evidence" value="ECO:0007669"/>
    <property type="project" value="TreeGrafter"/>
</dbReference>
<dbReference type="GO" id="GO:0015297">
    <property type="term" value="F:antiporter activity"/>
    <property type="evidence" value="ECO:0007669"/>
    <property type="project" value="TreeGrafter"/>
</dbReference>
<dbReference type="GO" id="GO:0015220">
    <property type="term" value="F:choline transmembrane transporter activity"/>
    <property type="evidence" value="ECO:0007669"/>
    <property type="project" value="TreeGrafter"/>
</dbReference>
<dbReference type="GO" id="GO:0015606">
    <property type="term" value="F:spermidine transmembrane transporter activity"/>
    <property type="evidence" value="ECO:0007669"/>
    <property type="project" value="UniProtKB-UniRule"/>
</dbReference>
<dbReference type="GO" id="GO:0031460">
    <property type="term" value="P:glycine betaine transport"/>
    <property type="evidence" value="ECO:0007669"/>
    <property type="project" value="TreeGrafter"/>
</dbReference>
<dbReference type="FunFam" id="1.10.3730.20:FF:000001">
    <property type="entry name" value="Quaternary ammonium compound resistance transporter SugE"/>
    <property type="match status" value="1"/>
</dbReference>
<dbReference type="Gene3D" id="1.10.3730.20">
    <property type="match status" value="1"/>
</dbReference>
<dbReference type="HAMAP" id="MF_01597">
    <property type="entry name" value="MdtI"/>
    <property type="match status" value="1"/>
</dbReference>
<dbReference type="InterPro" id="IPR000390">
    <property type="entry name" value="Small_drug/metabolite_transptr"/>
</dbReference>
<dbReference type="InterPro" id="IPR045324">
    <property type="entry name" value="Small_multidrug_res"/>
</dbReference>
<dbReference type="InterPro" id="IPR023737">
    <property type="entry name" value="Spermidine_export_MdtI"/>
</dbReference>
<dbReference type="NCBIfam" id="NF007934">
    <property type="entry name" value="PRK10650.1"/>
    <property type="match status" value="1"/>
</dbReference>
<dbReference type="PANTHER" id="PTHR30561">
    <property type="entry name" value="SMR FAMILY PROTON-DEPENDENT DRUG EFFLUX TRANSPORTER SUGE"/>
    <property type="match status" value="1"/>
</dbReference>
<dbReference type="PANTHER" id="PTHR30561:SF6">
    <property type="entry name" value="SPERMIDINE EXPORT PROTEIN MDTI"/>
    <property type="match status" value="1"/>
</dbReference>
<dbReference type="Pfam" id="PF00893">
    <property type="entry name" value="Multi_Drug_Res"/>
    <property type="match status" value="1"/>
</dbReference>
<dbReference type="SUPFAM" id="SSF103481">
    <property type="entry name" value="Multidrug resistance efflux transporter EmrE"/>
    <property type="match status" value="1"/>
</dbReference>
<reference key="1">
    <citation type="journal article" date="2008" name="DNA Res.">
        <title>Complete genome sequence and comparative analysis of the wild-type commensal Escherichia coli strain SE11 isolated from a healthy adult.</title>
        <authorList>
            <person name="Oshima K."/>
            <person name="Toh H."/>
            <person name="Ogura Y."/>
            <person name="Sasamoto H."/>
            <person name="Morita H."/>
            <person name="Park S.-H."/>
            <person name="Ooka T."/>
            <person name="Iyoda S."/>
            <person name="Taylor T.D."/>
            <person name="Hayashi T."/>
            <person name="Itoh K."/>
            <person name="Hattori M."/>
        </authorList>
    </citation>
    <scope>NUCLEOTIDE SEQUENCE [LARGE SCALE GENOMIC DNA]</scope>
    <source>
        <strain>SE11</strain>
    </source>
</reference>
<keyword id="KW-0997">Cell inner membrane</keyword>
<keyword id="KW-1003">Cell membrane</keyword>
<keyword id="KW-0472">Membrane</keyword>
<keyword id="KW-0812">Transmembrane</keyword>
<keyword id="KW-1133">Transmembrane helix</keyword>
<keyword id="KW-0813">Transport</keyword>
<organism>
    <name type="scientific">Escherichia coli (strain SE11)</name>
    <dbReference type="NCBI Taxonomy" id="409438"/>
    <lineage>
        <taxon>Bacteria</taxon>
        <taxon>Pseudomonadati</taxon>
        <taxon>Pseudomonadota</taxon>
        <taxon>Gammaproteobacteria</taxon>
        <taxon>Enterobacterales</taxon>
        <taxon>Enterobacteriaceae</taxon>
        <taxon>Escherichia</taxon>
    </lineage>
</organism>
<name>MDTI_ECOSE</name>
<proteinExistence type="inferred from homology"/>
<feature type="chain" id="PRO_1000197311" description="Spermidine export protein MdtI">
    <location>
        <begin position="1"/>
        <end position="109"/>
    </location>
</feature>
<feature type="transmembrane region" description="Helical" evidence="1">
    <location>
        <begin position="6"/>
        <end position="26"/>
    </location>
</feature>
<feature type="transmembrane region" description="Helical" evidence="1">
    <location>
        <begin position="36"/>
        <end position="56"/>
    </location>
</feature>
<feature type="transmembrane region" description="Helical" evidence="1">
    <location>
        <begin position="64"/>
        <end position="84"/>
    </location>
</feature>
<feature type="transmembrane region" description="Helical" evidence="1">
    <location>
        <begin position="88"/>
        <end position="108"/>
    </location>
</feature>
<evidence type="ECO:0000255" key="1">
    <source>
        <dbReference type="HAMAP-Rule" id="MF_01597"/>
    </source>
</evidence>